<organism>
    <name type="scientific">Rattus norvegicus</name>
    <name type="common">Rat</name>
    <dbReference type="NCBI Taxonomy" id="10116"/>
    <lineage>
        <taxon>Eukaryota</taxon>
        <taxon>Metazoa</taxon>
        <taxon>Chordata</taxon>
        <taxon>Craniata</taxon>
        <taxon>Vertebrata</taxon>
        <taxon>Euteleostomi</taxon>
        <taxon>Mammalia</taxon>
        <taxon>Eutheria</taxon>
        <taxon>Euarchontoglires</taxon>
        <taxon>Glires</taxon>
        <taxon>Rodentia</taxon>
        <taxon>Myomorpha</taxon>
        <taxon>Muroidea</taxon>
        <taxon>Muridae</taxon>
        <taxon>Murinae</taxon>
        <taxon>Rattus</taxon>
    </lineage>
</organism>
<accession>Q9EQX9</accession>
<comment type="function">
    <text evidence="1">The UBE2V1-UBE2N and UBE2V2-UBE2N heterodimers catalyze the synthesis of non-canonical 'Lys-63'-linked polyubiquitin chains. This type of polyubiquitination does not lead to protein degradation by the proteasome. Mediates transcriptional activation of target genes. Plays a role in the control of progress through the cell cycle and differentiation. Plays a role in the error-free DNA repair pathway and contributes to the survival of cells after DNA damage. Acts together with the E3 ligases, HLTF and SHPRH, in the 'Lys-63'-linked poly-ubiquitination of PCNA upon genotoxic stress, which is required for DNA repair. Appears to act together with E3 ligase RNF5 in the 'Lys-63'-linked polyubiquitination of JKAMP thereby regulating JKAMP function by decreasing its association with components of the proteasome and ERAD. Promotes TRIM5 capsid-specific restriction activity and the UBE2V1-UBE2N heterodimer acts in concert with TRIM5 to generate 'Lys-63'-linked polyubiquitin chains which activate the MAP3K7/TAK1 complex which in turn results in the induction and expression of NF-kappa-B and MAPK-responsive inflammatory genes. Together with RNF135 and UB2V1, catalyzes the viral RNA-dependent 'Lys-63'-linked polyubiquitination of RIGI to activate the downstream signaling pathway that leads to interferon beta production (By similarity). UBE2V1-UBE2N together with TRAF3IP2 E3 ubiquitin ligase mediate 'Lys-63'-linked polyubiquitination of TRAF6, a component of IL17A-mediated signaling pathway.</text>
</comment>
<comment type="catalytic activity">
    <reaction evidence="3 4">
        <text>S-ubiquitinyl-[E1 ubiquitin-activating enzyme]-L-cysteine + [E2 ubiquitin-conjugating enzyme]-L-cysteine = [E1 ubiquitin-activating enzyme]-L-cysteine + S-ubiquitinyl-[E2 ubiquitin-conjugating enzyme]-L-cysteine.</text>
        <dbReference type="EC" id="2.3.2.23"/>
    </reaction>
</comment>
<comment type="activity regulation">
    <text evidence="1 2">Activity is inhibited by binding to OTUB1, which prevents 'Lys-63'-linked polyubiquitination (By similarity). Activity is inhibited by GPS2, leading to prevent 'Lys-63'-linked polyubiquitination (By similarity).</text>
</comment>
<comment type="pathway">
    <text evidence="3">Protein modification; protein ubiquitination.</text>
</comment>
<comment type="subunit">
    <text evidence="1 2">Heterodimer with UBE2V2 (By similarity). Interacts (UBE2V2-UBE2N heterodimer) with the E3 ligase STUB1 (via the U-box domain); the complex has a specific 'Lys-63'-linked polyubiquitination activity (By similarity). Interacts with RNF8 and RNF168 (By similarity). Interacts with RNF11 (By similarity). Interacts with the E3 ligases, HLTF and SHPRH; the interactions promote the 'Lys-63'-linked polyubiquitination of PCNA upon genotoxic stress and lead to DNA repair (By similarity). Interacts with ARIH2 (via RING-type 2) (By similarity). Interacts with OTUB1; leading to inhibit E2-conjugating activity (By similarity). Interacts with GPS2; leading to inhibit E2-conjugating activity (By similarity). Interacts with RIGI and RNF135; involved in RIGI ubiquitination and activation (By similarity).</text>
</comment>
<comment type="PTM">
    <text evidence="1">Conjugation to ISG15 impairs formation of the thioester bond with ubiquitin but not interaction with UBE2V2.</text>
</comment>
<comment type="similarity">
    <text evidence="3">Belongs to the ubiquitin-conjugating enzyme family.</text>
</comment>
<evidence type="ECO:0000250" key="1">
    <source>
        <dbReference type="UniProtKB" id="P61088"/>
    </source>
</evidence>
<evidence type="ECO:0000250" key="2">
    <source>
        <dbReference type="UniProtKB" id="P61089"/>
    </source>
</evidence>
<evidence type="ECO:0000255" key="3">
    <source>
        <dbReference type="PROSITE-ProRule" id="PRU00388"/>
    </source>
</evidence>
<evidence type="ECO:0000255" key="4">
    <source>
        <dbReference type="PROSITE-ProRule" id="PRU10133"/>
    </source>
</evidence>
<evidence type="ECO:0007744" key="5">
    <source>
    </source>
</evidence>
<proteinExistence type="evidence at protein level"/>
<reference key="1">
    <citation type="submission" date="1999-09" db="EMBL/GenBank/DDBJ databases">
        <title>Expression of rat Bendless gene in the developing brain.</title>
        <authorList>
            <person name="Takahashi H."/>
            <person name="Yamamoto M."/>
            <person name="Saito Y."/>
        </authorList>
    </citation>
    <scope>NUCLEOTIDE SEQUENCE [MRNA]</scope>
    <source>
        <tissue>Brain</tissue>
    </source>
</reference>
<reference key="2">
    <citation type="journal article" date="2004" name="Genome Res.">
        <title>The status, quality, and expansion of the NIH full-length cDNA project: the Mammalian Gene Collection (MGC).</title>
        <authorList>
            <consortium name="The MGC Project Team"/>
        </authorList>
    </citation>
    <scope>NUCLEOTIDE SEQUENCE [LARGE SCALE MRNA]</scope>
    <source>
        <tissue>Testis</tissue>
    </source>
</reference>
<reference key="3">
    <citation type="submission" date="2007-04" db="UniProtKB">
        <authorList>
            <person name="Lubec G."/>
            <person name="Afjehi-Sadat L."/>
            <person name="Diao W."/>
        </authorList>
    </citation>
    <scope>PROTEIN SEQUENCE OF 34-68</scope>
    <scope>IDENTIFICATION BY MASS SPECTROMETRY</scope>
    <source>
        <strain>Sprague-Dawley</strain>
        <tissue>Hippocampus</tissue>
        <tissue>Spinal cord</tissue>
    </source>
</reference>
<reference key="4">
    <citation type="submission" date="2008-12" db="UniProtKB">
        <authorList>
            <person name="Maurya D.K."/>
            <person name="Bhargava P."/>
        </authorList>
    </citation>
    <scope>IDENTIFICATION BY MASS SPECTROMETRY</scope>
</reference>
<reference key="5">
    <citation type="journal article" date="2012" name="Nat. Commun.">
        <title>Quantitative maps of protein phosphorylation sites across 14 different rat organs and tissues.</title>
        <authorList>
            <person name="Lundby A."/>
            <person name="Secher A."/>
            <person name="Lage K."/>
            <person name="Nordsborg N.B."/>
            <person name="Dmytriyev A."/>
            <person name="Lundby C."/>
            <person name="Olsen J.V."/>
        </authorList>
    </citation>
    <scope>PHOSPHORYLATION [LARGE SCALE ANALYSIS] AT SER-131</scope>
    <scope>IDENTIFICATION BY MASS SPECTROMETRY [LARGE SCALE ANALYSIS]</scope>
</reference>
<gene>
    <name type="primary">Ube2n</name>
</gene>
<protein>
    <recommendedName>
        <fullName>Ubiquitin-conjugating enzyme E2 N</fullName>
        <ecNumber>2.3.2.23</ecNumber>
    </recommendedName>
    <alternativeName>
        <fullName>Bendless-like ubiquitin-conjugating enzyme</fullName>
    </alternativeName>
    <alternativeName>
        <fullName>E2 ubiquitin-conjugating enzyme N</fullName>
    </alternativeName>
    <alternativeName>
        <fullName>Ubiquitin carrier protein N</fullName>
    </alternativeName>
    <alternativeName>
        <fullName>Ubiquitin-protein ligase N</fullName>
    </alternativeName>
</protein>
<keyword id="KW-0007">Acetylation</keyword>
<keyword id="KW-0067">ATP-binding</keyword>
<keyword id="KW-0903">Direct protein sequencing</keyword>
<keyword id="KW-0227">DNA damage</keyword>
<keyword id="KW-0234">DNA repair</keyword>
<keyword id="KW-1017">Isopeptide bond</keyword>
<keyword id="KW-0547">Nucleotide-binding</keyword>
<keyword id="KW-0597">Phosphoprotein</keyword>
<keyword id="KW-1185">Reference proteome</keyword>
<keyword id="KW-0808">Transferase</keyword>
<keyword id="KW-0832">Ubl conjugation</keyword>
<keyword id="KW-0833">Ubl conjugation pathway</keyword>
<dbReference type="EC" id="2.3.2.23"/>
<dbReference type="EMBL" id="AB032739">
    <property type="protein sequence ID" value="BAB20414.1"/>
    <property type="molecule type" value="mRNA"/>
</dbReference>
<dbReference type="EMBL" id="BC090072">
    <property type="protein sequence ID" value="AAH90072.1"/>
    <property type="molecule type" value="mRNA"/>
</dbReference>
<dbReference type="RefSeq" id="NP_446380.1">
    <property type="nucleotide sequence ID" value="NM_053928.2"/>
</dbReference>
<dbReference type="SMR" id="Q9EQX9"/>
<dbReference type="BioGRID" id="250592">
    <property type="interactions" value="1"/>
</dbReference>
<dbReference type="FunCoup" id="Q9EQX9">
    <property type="interactions" value="3766"/>
</dbReference>
<dbReference type="IntAct" id="Q9EQX9">
    <property type="interactions" value="1"/>
</dbReference>
<dbReference type="STRING" id="10116.ENSRNOP00000071283"/>
<dbReference type="iPTMnet" id="Q9EQX9"/>
<dbReference type="PhosphoSitePlus" id="Q9EQX9"/>
<dbReference type="SwissPalm" id="Q9EQX9"/>
<dbReference type="jPOST" id="Q9EQX9"/>
<dbReference type="PaxDb" id="10116-ENSRNOP00000065259"/>
<dbReference type="Ensembl" id="ENSRNOT00000089874.2">
    <property type="protein sequence ID" value="ENSRNOP00000071283.1"/>
    <property type="gene ID" value="ENSRNOG00000058053.2"/>
</dbReference>
<dbReference type="GeneID" id="116725"/>
<dbReference type="KEGG" id="rno:116725"/>
<dbReference type="UCSC" id="RGD:621096">
    <property type="organism name" value="rat"/>
</dbReference>
<dbReference type="AGR" id="RGD:621096"/>
<dbReference type="CTD" id="7334"/>
<dbReference type="RGD" id="621096">
    <property type="gene designation" value="Ube2n"/>
</dbReference>
<dbReference type="eggNOG" id="KOG0417">
    <property type="taxonomic scope" value="Eukaryota"/>
</dbReference>
<dbReference type="GeneTree" id="ENSGT00540000070023"/>
<dbReference type="HOGENOM" id="CLU_030988_13_2_1"/>
<dbReference type="InParanoid" id="Q9EQX9"/>
<dbReference type="OMA" id="AEPHEDN"/>
<dbReference type="OrthoDB" id="7851174at2759"/>
<dbReference type="PhylomeDB" id="Q9EQX9"/>
<dbReference type="TreeFam" id="TF101126"/>
<dbReference type="UniPathway" id="UPA00143"/>
<dbReference type="PRO" id="PR:Q9EQX9"/>
<dbReference type="Proteomes" id="UP000002494">
    <property type="component" value="Chromosome 7"/>
</dbReference>
<dbReference type="Bgee" id="ENSRNOG00000058053">
    <property type="expression patterns" value="Expressed in testis and 20 other cell types or tissues"/>
</dbReference>
<dbReference type="GO" id="GO:0005737">
    <property type="term" value="C:cytoplasm"/>
    <property type="evidence" value="ECO:0000266"/>
    <property type="project" value="RGD"/>
</dbReference>
<dbReference type="GO" id="GO:0005829">
    <property type="term" value="C:cytosol"/>
    <property type="evidence" value="ECO:0000266"/>
    <property type="project" value="RGD"/>
</dbReference>
<dbReference type="GO" id="GO:0098978">
    <property type="term" value="C:glutamatergic synapse"/>
    <property type="evidence" value="ECO:0000314"/>
    <property type="project" value="SynGO"/>
</dbReference>
<dbReference type="GO" id="GO:0005634">
    <property type="term" value="C:nucleus"/>
    <property type="evidence" value="ECO:0000266"/>
    <property type="project" value="RGD"/>
</dbReference>
<dbReference type="GO" id="GO:0098794">
    <property type="term" value="C:postsynapse"/>
    <property type="evidence" value="ECO:0000314"/>
    <property type="project" value="SynGO"/>
</dbReference>
<dbReference type="GO" id="GO:0032991">
    <property type="term" value="C:protein-containing complex"/>
    <property type="evidence" value="ECO:0000266"/>
    <property type="project" value="RGD"/>
</dbReference>
<dbReference type="GO" id="GO:0031372">
    <property type="term" value="C:UBC13-MMS2 complex"/>
    <property type="evidence" value="ECO:0000250"/>
    <property type="project" value="UniProtKB"/>
</dbReference>
<dbReference type="GO" id="GO:0031371">
    <property type="term" value="C:ubiquitin conjugating enzyme complex"/>
    <property type="evidence" value="ECO:0000266"/>
    <property type="project" value="RGD"/>
</dbReference>
<dbReference type="GO" id="GO:0000151">
    <property type="term" value="C:ubiquitin ligase complex"/>
    <property type="evidence" value="ECO:0000250"/>
    <property type="project" value="UniProtKB"/>
</dbReference>
<dbReference type="GO" id="GO:0005524">
    <property type="term" value="F:ATP binding"/>
    <property type="evidence" value="ECO:0007669"/>
    <property type="project" value="UniProtKB-KW"/>
</dbReference>
<dbReference type="GO" id="GO:0043130">
    <property type="term" value="F:ubiquitin binding"/>
    <property type="evidence" value="ECO:0000266"/>
    <property type="project" value="RGD"/>
</dbReference>
<dbReference type="GO" id="GO:0061631">
    <property type="term" value="F:ubiquitin conjugating enzyme activity"/>
    <property type="evidence" value="ECO:0000250"/>
    <property type="project" value="UniProtKB"/>
</dbReference>
<dbReference type="GO" id="GO:0031625">
    <property type="term" value="F:ubiquitin protein ligase binding"/>
    <property type="evidence" value="ECO:0000266"/>
    <property type="project" value="RGD"/>
</dbReference>
<dbReference type="GO" id="GO:0097027">
    <property type="term" value="F:ubiquitin-protein transferase activator activity"/>
    <property type="evidence" value="ECO:0000266"/>
    <property type="project" value="RGD"/>
</dbReference>
<dbReference type="GO" id="GO:0004842">
    <property type="term" value="F:ubiquitin-protein transferase activity"/>
    <property type="evidence" value="ECO:0000315"/>
    <property type="project" value="RGD"/>
</dbReference>
<dbReference type="GO" id="GO:0140374">
    <property type="term" value="P:antiviral innate immune response"/>
    <property type="evidence" value="ECO:0000266"/>
    <property type="project" value="RGD"/>
</dbReference>
<dbReference type="GO" id="GO:0000729">
    <property type="term" value="P:DNA double-strand break processing"/>
    <property type="evidence" value="ECO:0000266"/>
    <property type="project" value="RGD"/>
</dbReference>
<dbReference type="GO" id="GO:0000724">
    <property type="term" value="P:double-strand break repair via homologous recombination"/>
    <property type="evidence" value="ECO:0000266"/>
    <property type="project" value="RGD"/>
</dbReference>
<dbReference type="GO" id="GO:1904262">
    <property type="term" value="P:negative regulation of TORC1 signaling"/>
    <property type="evidence" value="ECO:0000266"/>
    <property type="project" value="RGD"/>
</dbReference>
<dbReference type="GO" id="GO:0043123">
    <property type="term" value="P:positive regulation of canonical NF-kappaB signal transduction"/>
    <property type="evidence" value="ECO:0000266"/>
    <property type="project" value="RGD"/>
</dbReference>
<dbReference type="GO" id="GO:0045739">
    <property type="term" value="P:positive regulation of DNA repair"/>
    <property type="evidence" value="ECO:0000266"/>
    <property type="project" value="RGD"/>
</dbReference>
<dbReference type="GO" id="GO:2000781">
    <property type="term" value="P:positive regulation of double-strand break repair"/>
    <property type="evidence" value="ECO:0000266"/>
    <property type="project" value="RGD"/>
</dbReference>
<dbReference type="GO" id="GO:1902533">
    <property type="term" value="P:positive regulation of intracellular signal transduction"/>
    <property type="evidence" value="ECO:0000266"/>
    <property type="project" value="RGD"/>
</dbReference>
<dbReference type="GO" id="GO:1902523">
    <property type="term" value="P:positive regulation of protein K63-linked ubiquitination"/>
    <property type="evidence" value="ECO:0000266"/>
    <property type="project" value="RGD"/>
</dbReference>
<dbReference type="GO" id="GO:0006301">
    <property type="term" value="P:postreplication repair"/>
    <property type="evidence" value="ECO:0000266"/>
    <property type="project" value="RGD"/>
</dbReference>
<dbReference type="GO" id="GO:0043161">
    <property type="term" value="P:proteasome-mediated ubiquitin-dependent protein catabolic process"/>
    <property type="evidence" value="ECO:0000266"/>
    <property type="project" value="RGD"/>
</dbReference>
<dbReference type="GO" id="GO:0070534">
    <property type="term" value="P:protein K63-linked ubiquitination"/>
    <property type="evidence" value="ECO:0000250"/>
    <property type="project" value="UniProtKB"/>
</dbReference>
<dbReference type="GO" id="GO:0006513">
    <property type="term" value="P:protein monoubiquitination"/>
    <property type="evidence" value="ECO:0000266"/>
    <property type="project" value="RGD"/>
</dbReference>
<dbReference type="GO" id="GO:0000209">
    <property type="term" value="P:protein polyubiquitination"/>
    <property type="evidence" value="ECO:0000266"/>
    <property type="project" value="RGD"/>
</dbReference>
<dbReference type="GO" id="GO:0016567">
    <property type="term" value="P:protein ubiquitination"/>
    <property type="evidence" value="ECO:0000304"/>
    <property type="project" value="RGD"/>
</dbReference>
<dbReference type="GO" id="GO:0140252">
    <property type="term" value="P:regulation protein catabolic process at postsynapse"/>
    <property type="evidence" value="ECO:0000314"/>
    <property type="project" value="SynGO"/>
</dbReference>
<dbReference type="GO" id="GO:0050852">
    <property type="term" value="P:T cell receptor signaling pathway"/>
    <property type="evidence" value="ECO:0000266"/>
    <property type="project" value="RGD"/>
</dbReference>
<dbReference type="GO" id="GO:0006511">
    <property type="term" value="P:ubiquitin-dependent protein catabolic process"/>
    <property type="evidence" value="ECO:0000266"/>
    <property type="project" value="RGD"/>
</dbReference>
<dbReference type="CDD" id="cd23813">
    <property type="entry name" value="UBCc_UBE2N"/>
    <property type="match status" value="1"/>
</dbReference>
<dbReference type="FunFam" id="3.10.110.10:FF:000015">
    <property type="entry name" value="Ubiquitin-conjugating enzyme E2 N"/>
    <property type="match status" value="1"/>
</dbReference>
<dbReference type="Gene3D" id="3.10.110.10">
    <property type="entry name" value="Ubiquitin Conjugating Enzyme"/>
    <property type="match status" value="1"/>
</dbReference>
<dbReference type="InterPro" id="IPR000608">
    <property type="entry name" value="UBQ-conjugat_E2_core"/>
</dbReference>
<dbReference type="InterPro" id="IPR023313">
    <property type="entry name" value="UBQ-conjugating_AS"/>
</dbReference>
<dbReference type="InterPro" id="IPR016135">
    <property type="entry name" value="UBQ-conjugating_enzyme/RWD"/>
</dbReference>
<dbReference type="PANTHER" id="PTHR24068">
    <property type="entry name" value="UBIQUITIN-CONJUGATING ENZYME E2"/>
    <property type="match status" value="1"/>
</dbReference>
<dbReference type="Pfam" id="PF00179">
    <property type="entry name" value="UQ_con"/>
    <property type="match status" value="1"/>
</dbReference>
<dbReference type="SMART" id="SM00212">
    <property type="entry name" value="UBCc"/>
    <property type="match status" value="1"/>
</dbReference>
<dbReference type="SUPFAM" id="SSF54495">
    <property type="entry name" value="UBC-like"/>
    <property type="match status" value="1"/>
</dbReference>
<dbReference type="PROSITE" id="PS00183">
    <property type="entry name" value="UBC_1"/>
    <property type="match status" value="1"/>
</dbReference>
<dbReference type="PROSITE" id="PS50127">
    <property type="entry name" value="UBC_2"/>
    <property type="match status" value="1"/>
</dbReference>
<feature type="chain" id="PRO_0000082506" description="Ubiquitin-conjugating enzyme E2 N">
    <location>
        <begin position="1"/>
        <end position="152"/>
    </location>
</feature>
<feature type="domain" description="UBC core" evidence="3">
    <location>
        <begin position="3"/>
        <end position="149"/>
    </location>
</feature>
<feature type="active site" description="Glycyl thioester intermediate" evidence="3">
    <location>
        <position position="87"/>
    </location>
</feature>
<feature type="modified residue" description="N6-acetyllysine" evidence="1">
    <location>
        <position position="82"/>
    </location>
</feature>
<feature type="modified residue" description="Phosphoserine" evidence="5">
    <location>
        <position position="131"/>
    </location>
</feature>
<feature type="cross-link" description="Glycyl lysine isopeptide (Lys-Gly) (interchain with G-Cter in ISG15)" evidence="1">
    <location>
        <position position="92"/>
    </location>
</feature>
<sequence>MAGLPRRIIKETQRLLAEPVPGIKAEPDESNARYFHVVIAGPQDSPFEGGTFKLELFLPEEYPMAAPKVRFMTKIYHPNVDKLGRICLDILKDKWSPALQIRTVLLSIQALLSAPNPDDPLANDVAEQWKSNEAQAIETARAWTRLYAMNNI</sequence>
<name>UBE2N_RAT</name>